<accession>B2U0W4</accession>
<gene>
    <name evidence="1" type="primary">sprT</name>
    <name type="ordered locus">SbBS512_E3376</name>
</gene>
<feature type="chain" id="PRO_1000133256" description="Protein SprT">
    <location>
        <begin position="1"/>
        <end position="165"/>
    </location>
</feature>
<feature type="domain" description="SprT-like" evidence="1">
    <location>
        <begin position="20"/>
        <end position="163"/>
    </location>
</feature>
<feature type="active site" evidence="1">
    <location>
        <position position="79"/>
    </location>
</feature>
<feature type="binding site" evidence="1">
    <location>
        <position position="78"/>
    </location>
    <ligand>
        <name>Zn(2+)</name>
        <dbReference type="ChEBI" id="CHEBI:29105"/>
    </ligand>
</feature>
<feature type="binding site" evidence="1">
    <location>
        <position position="82"/>
    </location>
    <ligand>
        <name>Zn(2+)</name>
        <dbReference type="ChEBI" id="CHEBI:29105"/>
    </ligand>
</feature>
<evidence type="ECO:0000255" key="1">
    <source>
        <dbReference type="HAMAP-Rule" id="MF_00746"/>
    </source>
</evidence>
<reference key="1">
    <citation type="submission" date="2008-05" db="EMBL/GenBank/DDBJ databases">
        <title>Complete sequence of Shigella boydii serotype 18 strain BS512.</title>
        <authorList>
            <person name="Rasko D.A."/>
            <person name="Rosovitz M."/>
            <person name="Maurelli A.T."/>
            <person name="Myers G."/>
            <person name="Seshadri R."/>
            <person name="Cer R."/>
            <person name="Jiang L."/>
            <person name="Ravel J."/>
            <person name="Sebastian Y."/>
        </authorList>
    </citation>
    <scope>NUCLEOTIDE SEQUENCE [LARGE SCALE GENOMIC DNA]</scope>
    <source>
        <strain>CDC 3083-94 / BS512</strain>
    </source>
</reference>
<dbReference type="EMBL" id="CP001063">
    <property type="protein sequence ID" value="ACD08763.1"/>
    <property type="molecule type" value="Genomic_DNA"/>
</dbReference>
<dbReference type="RefSeq" id="WP_012421484.1">
    <property type="nucleotide sequence ID" value="NC_010658.1"/>
</dbReference>
<dbReference type="SMR" id="B2U0W4"/>
<dbReference type="STRING" id="344609.SbBS512_E3376"/>
<dbReference type="KEGG" id="sbc:SbBS512_E3376"/>
<dbReference type="HOGENOM" id="CLU_113336_0_1_6"/>
<dbReference type="Proteomes" id="UP000001030">
    <property type="component" value="Chromosome"/>
</dbReference>
<dbReference type="GO" id="GO:0005737">
    <property type="term" value="C:cytoplasm"/>
    <property type="evidence" value="ECO:0007669"/>
    <property type="project" value="UniProtKB-SubCell"/>
</dbReference>
<dbReference type="GO" id="GO:0008270">
    <property type="term" value="F:zinc ion binding"/>
    <property type="evidence" value="ECO:0007669"/>
    <property type="project" value="UniProtKB-UniRule"/>
</dbReference>
<dbReference type="GO" id="GO:0006950">
    <property type="term" value="P:response to stress"/>
    <property type="evidence" value="ECO:0007669"/>
    <property type="project" value="UniProtKB-ARBA"/>
</dbReference>
<dbReference type="Gene3D" id="3.30.2010.10">
    <property type="entry name" value="Metalloproteases ('zincins'), catalytic domain"/>
    <property type="match status" value="1"/>
</dbReference>
<dbReference type="HAMAP" id="MF_00746">
    <property type="entry name" value="SprT"/>
    <property type="match status" value="1"/>
</dbReference>
<dbReference type="InterPro" id="IPR006640">
    <property type="entry name" value="SprT-like_domain"/>
</dbReference>
<dbReference type="InterPro" id="IPR035240">
    <property type="entry name" value="SprT_Zn_ribbon"/>
</dbReference>
<dbReference type="InterPro" id="IPR023483">
    <property type="entry name" value="Uncharacterised_SprT"/>
</dbReference>
<dbReference type="NCBIfam" id="NF003421">
    <property type="entry name" value="PRK04860.1"/>
    <property type="match status" value="1"/>
</dbReference>
<dbReference type="PANTHER" id="PTHR38773">
    <property type="entry name" value="PROTEIN SPRT"/>
    <property type="match status" value="1"/>
</dbReference>
<dbReference type="PANTHER" id="PTHR38773:SF1">
    <property type="entry name" value="PROTEIN SPRT"/>
    <property type="match status" value="1"/>
</dbReference>
<dbReference type="Pfam" id="PF10263">
    <property type="entry name" value="SprT-like"/>
    <property type="match status" value="1"/>
</dbReference>
<dbReference type="Pfam" id="PF17283">
    <property type="entry name" value="Zn_ribbon_SprT"/>
    <property type="match status" value="1"/>
</dbReference>
<dbReference type="SMART" id="SM00731">
    <property type="entry name" value="SprT"/>
    <property type="match status" value="1"/>
</dbReference>
<dbReference type="PROSITE" id="PS00142">
    <property type="entry name" value="ZINC_PROTEASE"/>
    <property type="match status" value="1"/>
</dbReference>
<organism>
    <name type="scientific">Shigella boydii serotype 18 (strain CDC 3083-94 / BS512)</name>
    <dbReference type="NCBI Taxonomy" id="344609"/>
    <lineage>
        <taxon>Bacteria</taxon>
        <taxon>Pseudomonadati</taxon>
        <taxon>Pseudomonadota</taxon>
        <taxon>Gammaproteobacteria</taxon>
        <taxon>Enterobacterales</taxon>
        <taxon>Enterobacteriaceae</taxon>
        <taxon>Shigella</taxon>
    </lineage>
</organism>
<protein>
    <recommendedName>
        <fullName evidence="1">Protein SprT</fullName>
    </recommendedName>
</protein>
<name>SPRT_SHIB3</name>
<comment type="cofactor">
    <cofactor evidence="1">
        <name>Zn(2+)</name>
        <dbReference type="ChEBI" id="CHEBI:29105"/>
    </cofactor>
    <text evidence="1">Binds 1 zinc ion.</text>
</comment>
<comment type="subcellular location">
    <subcellularLocation>
        <location evidence="1">Cytoplasm</location>
    </subcellularLocation>
</comment>
<comment type="similarity">
    <text evidence="1">Belongs to the SprT family.</text>
</comment>
<sequence length="165" mass="19348">MKTSRLPIAIQQAVMRRLREKLAQANLKLGRNYPEPKLSYTQRGTSAGTAWLESYKIRLNPVLLLENSEAFIEEVVPHELAHLLVWKHFGRVAPHGKEWKWMMENVLGVPARRTHQFELQSVRRNTFPYRCKCQEHQLTVRRHNRVVRGEAVYRCVHCGEQLVAK</sequence>
<keyword id="KW-0963">Cytoplasm</keyword>
<keyword id="KW-0479">Metal-binding</keyword>
<keyword id="KW-1185">Reference proteome</keyword>
<keyword id="KW-0862">Zinc</keyword>
<proteinExistence type="inferred from homology"/>